<organism>
    <name type="scientific">Methylorubrum extorquens (strain CM4 / NCIMB 13688)</name>
    <name type="common">Methylobacterium extorquens</name>
    <dbReference type="NCBI Taxonomy" id="440085"/>
    <lineage>
        <taxon>Bacteria</taxon>
        <taxon>Pseudomonadati</taxon>
        <taxon>Pseudomonadota</taxon>
        <taxon>Alphaproteobacteria</taxon>
        <taxon>Hyphomicrobiales</taxon>
        <taxon>Methylobacteriaceae</taxon>
        <taxon>Methylorubrum</taxon>
    </lineage>
</organism>
<sequence>MTDFRTLDDAGPLQGKRVLLRVDLNVPMEGGRVTDATRIERVVPTIREIADAGGRVILLAHFGRPKGKPDPKDSLKPILSTLSEKLGRPVAFGEDCVGEAAASAVAALKDGDVILLENTRYHAGEEKNDPDFAKALAANGDIYVNEAFSAAHRAHASTEALARLLPAYAGRLMQAELDALTKGLEAPARPVIAIVGGAKVSTKIDLLENLVAKVDMLVIGGGMANTFLHAQGKDVGKSLCEKDLAETAKRILAAAKEKNCTIILPVDALVAREFRANAENETVPVDAVPSDAMILDVGASSIATIDGAIEEARTLVWNGPLGAFELTPFDTGTVAVAQHAARRTKAGQLVSVAGGGDTVAALNHAGVGEDFSYVSTAGGAFLEWLEGKELPGVEALRAQG</sequence>
<feature type="chain" id="PRO_1000203339" description="Phosphoglycerate kinase">
    <location>
        <begin position="1"/>
        <end position="400"/>
    </location>
</feature>
<feature type="binding site" evidence="1">
    <location>
        <begin position="23"/>
        <end position="25"/>
    </location>
    <ligand>
        <name>substrate</name>
    </ligand>
</feature>
<feature type="binding site" evidence="1">
    <location>
        <position position="38"/>
    </location>
    <ligand>
        <name>substrate</name>
    </ligand>
</feature>
<feature type="binding site" evidence="1">
    <location>
        <begin position="61"/>
        <end position="64"/>
    </location>
    <ligand>
        <name>substrate</name>
    </ligand>
</feature>
<feature type="binding site" evidence="1">
    <location>
        <position position="120"/>
    </location>
    <ligand>
        <name>substrate</name>
    </ligand>
</feature>
<feature type="binding site" evidence="1">
    <location>
        <position position="153"/>
    </location>
    <ligand>
        <name>substrate</name>
    </ligand>
</feature>
<feature type="binding site" evidence="1">
    <location>
        <position position="203"/>
    </location>
    <ligand>
        <name>ATP</name>
        <dbReference type="ChEBI" id="CHEBI:30616"/>
    </ligand>
</feature>
<feature type="binding site" evidence="1">
    <location>
        <position position="325"/>
    </location>
    <ligand>
        <name>ATP</name>
        <dbReference type="ChEBI" id="CHEBI:30616"/>
    </ligand>
</feature>
<feature type="binding site" evidence="1">
    <location>
        <begin position="355"/>
        <end position="358"/>
    </location>
    <ligand>
        <name>ATP</name>
        <dbReference type="ChEBI" id="CHEBI:30616"/>
    </ligand>
</feature>
<reference key="1">
    <citation type="submission" date="2008-12" db="EMBL/GenBank/DDBJ databases">
        <title>Complete sequence of chromosome of Methylobacterium chloromethanicum CM4.</title>
        <authorList>
            <consortium name="US DOE Joint Genome Institute"/>
            <person name="Lucas S."/>
            <person name="Copeland A."/>
            <person name="Lapidus A."/>
            <person name="Glavina del Rio T."/>
            <person name="Dalin E."/>
            <person name="Tice H."/>
            <person name="Bruce D."/>
            <person name="Goodwin L."/>
            <person name="Pitluck S."/>
            <person name="Chertkov O."/>
            <person name="Brettin T."/>
            <person name="Detter J.C."/>
            <person name="Han C."/>
            <person name="Larimer F."/>
            <person name="Land M."/>
            <person name="Hauser L."/>
            <person name="Kyrpides N."/>
            <person name="Mikhailova N."/>
            <person name="Marx C."/>
            <person name="Richardson P."/>
        </authorList>
    </citation>
    <scope>NUCLEOTIDE SEQUENCE [LARGE SCALE GENOMIC DNA]</scope>
    <source>
        <strain>CM4 / NCIMB 13688</strain>
    </source>
</reference>
<keyword id="KW-0067">ATP-binding</keyword>
<keyword id="KW-0963">Cytoplasm</keyword>
<keyword id="KW-0324">Glycolysis</keyword>
<keyword id="KW-0418">Kinase</keyword>
<keyword id="KW-0547">Nucleotide-binding</keyword>
<keyword id="KW-0808">Transferase</keyword>
<evidence type="ECO:0000255" key="1">
    <source>
        <dbReference type="HAMAP-Rule" id="MF_00145"/>
    </source>
</evidence>
<name>PGK_METC4</name>
<dbReference type="EC" id="2.7.2.3" evidence="1"/>
<dbReference type="EMBL" id="CP001298">
    <property type="protein sequence ID" value="ACK83485.1"/>
    <property type="molecule type" value="Genomic_DNA"/>
</dbReference>
<dbReference type="RefSeq" id="WP_015950997.1">
    <property type="nucleotide sequence ID" value="NC_011757.1"/>
</dbReference>
<dbReference type="SMR" id="B7KNP6"/>
<dbReference type="KEGG" id="mch:Mchl_2645"/>
<dbReference type="HOGENOM" id="CLU_025427_0_2_5"/>
<dbReference type="UniPathway" id="UPA00109">
    <property type="reaction ID" value="UER00185"/>
</dbReference>
<dbReference type="Proteomes" id="UP000002385">
    <property type="component" value="Chromosome"/>
</dbReference>
<dbReference type="GO" id="GO:0005829">
    <property type="term" value="C:cytosol"/>
    <property type="evidence" value="ECO:0007669"/>
    <property type="project" value="TreeGrafter"/>
</dbReference>
<dbReference type="GO" id="GO:0043531">
    <property type="term" value="F:ADP binding"/>
    <property type="evidence" value="ECO:0007669"/>
    <property type="project" value="TreeGrafter"/>
</dbReference>
<dbReference type="GO" id="GO:0005524">
    <property type="term" value="F:ATP binding"/>
    <property type="evidence" value="ECO:0007669"/>
    <property type="project" value="UniProtKB-KW"/>
</dbReference>
<dbReference type="GO" id="GO:0004618">
    <property type="term" value="F:phosphoglycerate kinase activity"/>
    <property type="evidence" value="ECO:0007669"/>
    <property type="project" value="UniProtKB-UniRule"/>
</dbReference>
<dbReference type="GO" id="GO:0006094">
    <property type="term" value="P:gluconeogenesis"/>
    <property type="evidence" value="ECO:0007669"/>
    <property type="project" value="TreeGrafter"/>
</dbReference>
<dbReference type="GO" id="GO:0006096">
    <property type="term" value="P:glycolytic process"/>
    <property type="evidence" value="ECO:0007669"/>
    <property type="project" value="UniProtKB-UniRule"/>
</dbReference>
<dbReference type="CDD" id="cd00318">
    <property type="entry name" value="Phosphoglycerate_kinase"/>
    <property type="match status" value="1"/>
</dbReference>
<dbReference type="FunFam" id="3.40.50.1260:FF:000006">
    <property type="entry name" value="Phosphoglycerate kinase"/>
    <property type="match status" value="1"/>
</dbReference>
<dbReference type="FunFam" id="3.40.50.1260:FF:000031">
    <property type="entry name" value="Phosphoglycerate kinase 1"/>
    <property type="match status" value="1"/>
</dbReference>
<dbReference type="Gene3D" id="3.40.50.1260">
    <property type="entry name" value="Phosphoglycerate kinase, N-terminal domain"/>
    <property type="match status" value="2"/>
</dbReference>
<dbReference type="HAMAP" id="MF_00145">
    <property type="entry name" value="Phosphoglyc_kinase"/>
    <property type="match status" value="1"/>
</dbReference>
<dbReference type="InterPro" id="IPR001576">
    <property type="entry name" value="Phosphoglycerate_kinase"/>
</dbReference>
<dbReference type="InterPro" id="IPR015911">
    <property type="entry name" value="Phosphoglycerate_kinase_CS"/>
</dbReference>
<dbReference type="InterPro" id="IPR015824">
    <property type="entry name" value="Phosphoglycerate_kinase_N"/>
</dbReference>
<dbReference type="InterPro" id="IPR036043">
    <property type="entry name" value="Phosphoglycerate_kinase_sf"/>
</dbReference>
<dbReference type="PANTHER" id="PTHR11406">
    <property type="entry name" value="PHOSPHOGLYCERATE KINASE"/>
    <property type="match status" value="1"/>
</dbReference>
<dbReference type="PANTHER" id="PTHR11406:SF23">
    <property type="entry name" value="PHOSPHOGLYCERATE KINASE 1, CHLOROPLASTIC-RELATED"/>
    <property type="match status" value="1"/>
</dbReference>
<dbReference type="Pfam" id="PF00162">
    <property type="entry name" value="PGK"/>
    <property type="match status" value="1"/>
</dbReference>
<dbReference type="PIRSF" id="PIRSF000724">
    <property type="entry name" value="Pgk"/>
    <property type="match status" value="1"/>
</dbReference>
<dbReference type="PRINTS" id="PR00477">
    <property type="entry name" value="PHGLYCKINASE"/>
</dbReference>
<dbReference type="SUPFAM" id="SSF53748">
    <property type="entry name" value="Phosphoglycerate kinase"/>
    <property type="match status" value="1"/>
</dbReference>
<dbReference type="PROSITE" id="PS00111">
    <property type="entry name" value="PGLYCERATE_KINASE"/>
    <property type="match status" value="1"/>
</dbReference>
<comment type="catalytic activity">
    <reaction evidence="1">
        <text>(2R)-3-phosphoglycerate + ATP = (2R)-3-phospho-glyceroyl phosphate + ADP</text>
        <dbReference type="Rhea" id="RHEA:14801"/>
        <dbReference type="ChEBI" id="CHEBI:30616"/>
        <dbReference type="ChEBI" id="CHEBI:57604"/>
        <dbReference type="ChEBI" id="CHEBI:58272"/>
        <dbReference type="ChEBI" id="CHEBI:456216"/>
        <dbReference type="EC" id="2.7.2.3"/>
    </reaction>
</comment>
<comment type="pathway">
    <text evidence="1">Carbohydrate degradation; glycolysis; pyruvate from D-glyceraldehyde 3-phosphate: step 2/5.</text>
</comment>
<comment type="subunit">
    <text evidence="1">Monomer.</text>
</comment>
<comment type="subcellular location">
    <subcellularLocation>
        <location evidence="1">Cytoplasm</location>
    </subcellularLocation>
</comment>
<comment type="similarity">
    <text evidence="1">Belongs to the phosphoglycerate kinase family.</text>
</comment>
<gene>
    <name evidence="1" type="primary">pgk</name>
    <name type="ordered locus">Mchl_2645</name>
</gene>
<protein>
    <recommendedName>
        <fullName evidence="1">Phosphoglycerate kinase</fullName>
        <ecNumber evidence="1">2.7.2.3</ecNumber>
    </recommendedName>
</protein>
<proteinExistence type="inferred from homology"/>
<accession>B7KNP6</accession>